<evidence type="ECO:0000250" key="1">
    <source>
        <dbReference type="UniProtKB" id="P17010"/>
    </source>
</evidence>
<evidence type="ECO:0000255" key="2">
    <source>
        <dbReference type="PROSITE-ProRule" id="PRU00042"/>
    </source>
</evidence>
<evidence type="ECO:0000305" key="3"/>
<reference key="1">
    <citation type="journal article" date="1997" name="Theriogenology">
        <title>Relevance of intersexuality to breeding and reproductive biotechnology programs; XX sex reversal in pigs.</title>
        <authorList>
            <person name="Pailhoux E.A."/>
            <person name="Pelliniemi L."/>
            <person name="Barbos A."/>
            <person name="Parma P."/>
            <person name="Kuopio T."/>
            <person name="Cotinot C.Y."/>
        </authorList>
    </citation>
    <scope>NUCLEOTIDE SEQUENCE [GENOMIC DNA]</scope>
    <source>
        <tissue>Lymphocyte</tissue>
    </source>
</reference>
<keyword id="KW-0010">Activator</keyword>
<keyword id="KW-0238">DNA-binding</keyword>
<keyword id="KW-0479">Metal-binding</keyword>
<keyword id="KW-0539">Nucleus</keyword>
<keyword id="KW-1185">Reference proteome</keyword>
<keyword id="KW-0677">Repeat</keyword>
<keyword id="KW-0804">Transcription</keyword>
<keyword id="KW-0805">Transcription regulation</keyword>
<keyword id="KW-0862">Zinc</keyword>
<keyword id="KW-0863">Zinc-finger</keyword>
<feature type="chain" id="PRO_0000047260" description="Zinc finger X-chromosomal protein">
    <location>
        <begin position="1" status="less than"/>
        <end position="148" status="greater than"/>
    </location>
</feature>
<feature type="zinc finger region" description="C2H2-type 1" evidence="2">
    <location>
        <begin position="16"/>
        <end position="38"/>
    </location>
</feature>
<feature type="zinc finger region" description="C2H2-type 2" evidence="2">
    <location>
        <begin position="76"/>
        <end position="98"/>
    </location>
</feature>
<feature type="non-terminal residue">
    <location>
        <position position="1"/>
    </location>
</feature>
<feature type="non-terminal residue">
    <location>
        <position position="148"/>
    </location>
</feature>
<proteinExistence type="inferred from homology"/>
<name>ZFX_PIG</name>
<organism>
    <name type="scientific">Sus scrofa</name>
    <name type="common">Pig</name>
    <dbReference type="NCBI Taxonomy" id="9823"/>
    <lineage>
        <taxon>Eukaryota</taxon>
        <taxon>Metazoa</taxon>
        <taxon>Chordata</taxon>
        <taxon>Craniata</taxon>
        <taxon>Vertebrata</taxon>
        <taxon>Euteleostomi</taxon>
        <taxon>Mammalia</taxon>
        <taxon>Eutheria</taxon>
        <taxon>Laurasiatheria</taxon>
        <taxon>Artiodactyla</taxon>
        <taxon>Suina</taxon>
        <taxon>Suidae</taxon>
        <taxon>Sus</taxon>
    </lineage>
</organism>
<dbReference type="EMBL" id="X75510">
    <property type="protein sequence ID" value="CAA53221.1"/>
    <property type="molecule type" value="Genomic_DNA"/>
</dbReference>
<dbReference type="PIR" id="S38660">
    <property type="entry name" value="S38660"/>
</dbReference>
<dbReference type="SMR" id="P80944"/>
<dbReference type="STRING" id="9823.ENSSSCP00000012966"/>
<dbReference type="PaxDb" id="9823-ENSSSCP00000012966"/>
<dbReference type="eggNOG" id="KOG1721">
    <property type="taxonomic scope" value="Eukaryota"/>
</dbReference>
<dbReference type="InParanoid" id="P80944"/>
<dbReference type="Proteomes" id="UP000008227">
    <property type="component" value="Unplaced"/>
</dbReference>
<dbReference type="Proteomes" id="UP000314985">
    <property type="component" value="Unplaced"/>
</dbReference>
<dbReference type="Proteomes" id="UP000694570">
    <property type="component" value="Unplaced"/>
</dbReference>
<dbReference type="Proteomes" id="UP000694571">
    <property type="component" value="Unplaced"/>
</dbReference>
<dbReference type="Proteomes" id="UP000694720">
    <property type="component" value="Unplaced"/>
</dbReference>
<dbReference type="Proteomes" id="UP000694722">
    <property type="component" value="Unplaced"/>
</dbReference>
<dbReference type="Proteomes" id="UP000694723">
    <property type="component" value="Unplaced"/>
</dbReference>
<dbReference type="Proteomes" id="UP000694724">
    <property type="component" value="Unplaced"/>
</dbReference>
<dbReference type="Proteomes" id="UP000694725">
    <property type="component" value="Unplaced"/>
</dbReference>
<dbReference type="Proteomes" id="UP000694726">
    <property type="component" value="Unplaced"/>
</dbReference>
<dbReference type="Proteomes" id="UP000694727">
    <property type="component" value="Unplaced"/>
</dbReference>
<dbReference type="Proteomes" id="UP000694728">
    <property type="component" value="Unplaced"/>
</dbReference>
<dbReference type="GO" id="GO:0005634">
    <property type="term" value="C:nucleus"/>
    <property type="evidence" value="ECO:0007669"/>
    <property type="project" value="UniProtKB-SubCell"/>
</dbReference>
<dbReference type="GO" id="GO:0003677">
    <property type="term" value="F:DNA binding"/>
    <property type="evidence" value="ECO:0007669"/>
    <property type="project" value="UniProtKB-KW"/>
</dbReference>
<dbReference type="GO" id="GO:0001228">
    <property type="term" value="F:DNA-binding transcription activator activity, RNA polymerase II-specific"/>
    <property type="evidence" value="ECO:0000250"/>
    <property type="project" value="UniProtKB"/>
</dbReference>
<dbReference type="GO" id="GO:0008270">
    <property type="term" value="F:zinc ion binding"/>
    <property type="evidence" value="ECO:0007669"/>
    <property type="project" value="UniProtKB-KW"/>
</dbReference>
<dbReference type="FunFam" id="3.30.160.60:FF:000054">
    <property type="entry name" value="Zinc finger protein 711"/>
    <property type="match status" value="1"/>
</dbReference>
<dbReference type="FunFam" id="3.30.160.60:FF:000170">
    <property type="entry name" value="Zinc finger protein 711 isoform X2"/>
    <property type="match status" value="1"/>
</dbReference>
<dbReference type="FunFam" id="3.30.160.60:FF:000607">
    <property type="entry name" value="zinc finger X-chromosomal protein-like isoform X1"/>
    <property type="match status" value="1"/>
</dbReference>
<dbReference type="Gene3D" id="3.30.160.60">
    <property type="entry name" value="Classic Zinc Finger"/>
    <property type="match status" value="3"/>
</dbReference>
<dbReference type="InterPro" id="IPR050527">
    <property type="entry name" value="Snail/Krueppel_Znf"/>
</dbReference>
<dbReference type="InterPro" id="IPR036236">
    <property type="entry name" value="Znf_C2H2_sf"/>
</dbReference>
<dbReference type="InterPro" id="IPR013087">
    <property type="entry name" value="Znf_C2H2_type"/>
</dbReference>
<dbReference type="PANTHER" id="PTHR24388">
    <property type="entry name" value="ZINC FINGER PROTEIN"/>
    <property type="match status" value="1"/>
</dbReference>
<dbReference type="PANTHER" id="PTHR24388:SF73">
    <property type="entry name" value="ZINC FINGER PROTEIN ZFAT"/>
    <property type="match status" value="1"/>
</dbReference>
<dbReference type="Pfam" id="PF00096">
    <property type="entry name" value="zf-C2H2"/>
    <property type="match status" value="2"/>
</dbReference>
<dbReference type="Pfam" id="PF13909">
    <property type="entry name" value="zf-H2C2_5"/>
    <property type="match status" value="1"/>
</dbReference>
<dbReference type="SMART" id="SM00355">
    <property type="entry name" value="ZnF_C2H2"/>
    <property type="match status" value="4"/>
</dbReference>
<dbReference type="SUPFAM" id="SSF57667">
    <property type="entry name" value="beta-beta-alpha zinc fingers"/>
    <property type="match status" value="3"/>
</dbReference>
<dbReference type="PROSITE" id="PS00028">
    <property type="entry name" value="ZINC_FINGER_C2H2_1"/>
    <property type="match status" value="2"/>
</dbReference>
<dbReference type="PROSITE" id="PS50157">
    <property type="entry name" value="ZINC_FINGER_C2H2_2"/>
    <property type="match status" value="4"/>
</dbReference>
<sequence>NHMESHKLTSKAEKAIECDECGKHFSHAGALFTHKMVHKEKGANKMHKCKFCEYETAEQGLLNRHLLAVHSKNFPHICVECGKGFRHPSELKKHMRIHTGEKPYQCQYCEYRSADSSNLKTHVKTKHSKEMPFKCDICLLTFSDTKEV</sequence>
<accession>P80944</accession>
<comment type="function">
    <text evidence="1">Probable transcriptional activator.</text>
</comment>
<comment type="subcellular location">
    <subcellularLocation>
        <location>Nucleus</location>
    </subcellularLocation>
</comment>
<comment type="similarity">
    <text evidence="3">Belongs to the krueppel C2H2-type zinc-finger protein family. ZFX/ZFY subfamily.</text>
</comment>
<protein>
    <recommendedName>
        <fullName>Zinc finger X-chromosomal protein</fullName>
    </recommendedName>
</protein>
<gene>
    <name type="primary">ZFX</name>
</gene>